<organism>
    <name type="scientific">Daption capense</name>
    <name type="common">Cape petrel</name>
    <name type="synonym">Cape pigeon</name>
    <dbReference type="NCBI Taxonomy" id="37055"/>
    <lineage>
        <taxon>Eukaryota</taxon>
        <taxon>Metazoa</taxon>
        <taxon>Chordata</taxon>
        <taxon>Craniata</taxon>
        <taxon>Vertebrata</taxon>
        <taxon>Euteleostomi</taxon>
        <taxon>Archelosauria</taxon>
        <taxon>Archosauria</taxon>
        <taxon>Dinosauria</taxon>
        <taxon>Saurischia</taxon>
        <taxon>Theropoda</taxon>
        <taxon>Coelurosauria</taxon>
        <taxon>Aves</taxon>
        <taxon>Neognathae</taxon>
        <taxon>Neoaves</taxon>
        <taxon>Aequornithes</taxon>
        <taxon>Procellariiformes</taxon>
        <taxon>Procellariidae</taxon>
        <taxon>Daption</taxon>
    </lineage>
</organism>
<sequence length="380" mass="42749">MAPNLRKSHPLLKMINNSLIDLPTPSNISAWWNFGSLLGICLMTQILTGLLLAMHYTADTTLAFSSVAHTCRNVQYGWLIRNLHANGASFFFICIYLHIGRGFYYGSYLYKETWNTGIILLLTLMATAFVGYVLPWGQMSFWGATVITNLFSAIPYIGQTLVEWAWGGFSVDNPTLTRFFALHFLLPFAIAGLTLIHLTFLHESGSNNPLGIMSNCDKIPFHPYFTLKDILGFTLMFLPLTSLALFSPNLLGDPENFTPANPLVTPPHIKPEWYFLFAYAILRSIPNKLGGVLALAASVLILFLSPFLHKAKQRTMTFRPLSQLLFWILVTNLFILTWVGSQPVEHPFIIIGQLASITYFTILLILFPVIGTLENKMLNY</sequence>
<evidence type="ECO:0000250" key="1"/>
<evidence type="ECO:0000250" key="2">
    <source>
        <dbReference type="UniProtKB" id="P00157"/>
    </source>
</evidence>
<evidence type="ECO:0000255" key="3">
    <source>
        <dbReference type="PROSITE-ProRule" id="PRU00967"/>
    </source>
</evidence>
<evidence type="ECO:0000255" key="4">
    <source>
        <dbReference type="PROSITE-ProRule" id="PRU00968"/>
    </source>
</evidence>
<protein>
    <recommendedName>
        <fullName>Cytochrome b</fullName>
    </recommendedName>
    <alternativeName>
        <fullName>Complex III subunit 3</fullName>
    </alternativeName>
    <alternativeName>
        <fullName>Complex III subunit III</fullName>
    </alternativeName>
    <alternativeName>
        <fullName>Cytochrome b-c1 complex subunit 3</fullName>
    </alternativeName>
    <alternativeName>
        <fullName>Ubiquinol-cytochrome-c reductase complex cytochrome b subunit</fullName>
    </alternativeName>
</protein>
<dbReference type="EMBL" id="AF076046">
    <property type="protein sequence ID" value="AAC68603.1"/>
    <property type="molecule type" value="Genomic_DNA"/>
</dbReference>
<dbReference type="SMR" id="O79197"/>
<dbReference type="GO" id="GO:0005743">
    <property type="term" value="C:mitochondrial inner membrane"/>
    <property type="evidence" value="ECO:0007669"/>
    <property type="project" value="UniProtKB-SubCell"/>
</dbReference>
<dbReference type="GO" id="GO:0045275">
    <property type="term" value="C:respiratory chain complex III"/>
    <property type="evidence" value="ECO:0007669"/>
    <property type="project" value="InterPro"/>
</dbReference>
<dbReference type="GO" id="GO:0046872">
    <property type="term" value="F:metal ion binding"/>
    <property type="evidence" value="ECO:0007669"/>
    <property type="project" value="UniProtKB-KW"/>
</dbReference>
<dbReference type="GO" id="GO:0008121">
    <property type="term" value="F:ubiquinol-cytochrome-c reductase activity"/>
    <property type="evidence" value="ECO:0007669"/>
    <property type="project" value="InterPro"/>
</dbReference>
<dbReference type="GO" id="GO:0006122">
    <property type="term" value="P:mitochondrial electron transport, ubiquinol to cytochrome c"/>
    <property type="evidence" value="ECO:0007669"/>
    <property type="project" value="TreeGrafter"/>
</dbReference>
<dbReference type="CDD" id="cd00290">
    <property type="entry name" value="cytochrome_b_C"/>
    <property type="match status" value="1"/>
</dbReference>
<dbReference type="CDD" id="cd00284">
    <property type="entry name" value="Cytochrome_b_N"/>
    <property type="match status" value="1"/>
</dbReference>
<dbReference type="FunFam" id="1.20.810.10:FF:000002">
    <property type="entry name" value="Cytochrome b"/>
    <property type="match status" value="1"/>
</dbReference>
<dbReference type="Gene3D" id="1.20.810.10">
    <property type="entry name" value="Cytochrome Bc1 Complex, Chain C"/>
    <property type="match status" value="1"/>
</dbReference>
<dbReference type="InterPro" id="IPR005798">
    <property type="entry name" value="Cyt_b/b6_C"/>
</dbReference>
<dbReference type="InterPro" id="IPR036150">
    <property type="entry name" value="Cyt_b/b6_C_sf"/>
</dbReference>
<dbReference type="InterPro" id="IPR005797">
    <property type="entry name" value="Cyt_b/b6_N"/>
</dbReference>
<dbReference type="InterPro" id="IPR027387">
    <property type="entry name" value="Cytb/b6-like_sf"/>
</dbReference>
<dbReference type="InterPro" id="IPR030689">
    <property type="entry name" value="Cytochrome_b"/>
</dbReference>
<dbReference type="InterPro" id="IPR048260">
    <property type="entry name" value="Cytochrome_b_C_euk/bac"/>
</dbReference>
<dbReference type="InterPro" id="IPR048259">
    <property type="entry name" value="Cytochrome_b_N_euk/bac"/>
</dbReference>
<dbReference type="InterPro" id="IPR016174">
    <property type="entry name" value="Di-haem_cyt_TM"/>
</dbReference>
<dbReference type="PANTHER" id="PTHR19271">
    <property type="entry name" value="CYTOCHROME B"/>
    <property type="match status" value="1"/>
</dbReference>
<dbReference type="PANTHER" id="PTHR19271:SF16">
    <property type="entry name" value="CYTOCHROME B"/>
    <property type="match status" value="1"/>
</dbReference>
<dbReference type="Pfam" id="PF00032">
    <property type="entry name" value="Cytochrom_B_C"/>
    <property type="match status" value="1"/>
</dbReference>
<dbReference type="Pfam" id="PF00033">
    <property type="entry name" value="Cytochrome_B"/>
    <property type="match status" value="1"/>
</dbReference>
<dbReference type="PIRSF" id="PIRSF038885">
    <property type="entry name" value="COB"/>
    <property type="match status" value="1"/>
</dbReference>
<dbReference type="SUPFAM" id="SSF81648">
    <property type="entry name" value="a domain/subunit of cytochrome bc1 complex (Ubiquinol-cytochrome c reductase)"/>
    <property type="match status" value="1"/>
</dbReference>
<dbReference type="SUPFAM" id="SSF81342">
    <property type="entry name" value="Transmembrane di-heme cytochromes"/>
    <property type="match status" value="1"/>
</dbReference>
<dbReference type="PROSITE" id="PS51003">
    <property type="entry name" value="CYTB_CTER"/>
    <property type="match status" value="1"/>
</dbReference>
<dbReference type="PROSITE" id="PS51002">
    <property type="entry name" value="CYTB_NTER"/>
    <property type="match status" value="1"/>
</dbReference>
<reference key="1">
    <citation type="journal article" date="1998" name="Mol. Biol. Evol.">
        <title>Body size effects and rates of cytochrome-b evolution in tube-nosed seabirds.</title>
        <authorList>
            <person name="Nunn G.B."/>
            <person name="Stanley S.E."/>
        </authorList>
    </citation>
    <scope>NUCLEOTIDE SEQUENCE [GENOMIC DNA]</scope>
</reference>
<proteinExistence type="inferred from homology"/>
<feature type="chain" id="PRO_0000060860" description="Cytochrome b">
    <location>
        <begin position="1"/>
        <end position="380"/>
    </location>
</feature>
<feature type="transmembrane region" description="Helical" evidence="2">
    <location>
        <begin position="34"/>
        <end position="54"/>
    </location>
</feature>
<feature type="transmembrane region" description="Helical" evidence="2">
    <location>
        <begin position="78"/>
        <end position="99"/>
    </location>
</feature>
<feature type="transmembrane region" description="Helical" evidence="2">
    <location>
        <begin position="114"/>
        <end position="134"/>
    </location>
</feature>
<feature type="transmembrane region" description="Helical" evidence="2">
    <location>
        <begin position="179"/>
        <end position="199"/>
    </location>
</feature>
<feature type="transmembrane region" description="Helical" evidence="2">
    <location>
        <begin position="227"/>
        <end position="247"/>
    </location>
</feature>
<feature type="transmembrane region" description="Helical" evidence="2">
    <location>
        <begin position="289"/>
        <end position="309"/>
    </location>
</feature>
<feature type="transmembrane region" description="Helical" evidence="2">
    <location>
        <begin position="321"/>
        <end position="341"/>
    </location>
</feature>
<feature type="transmembrane region" description="Helical" evidence="2">
    <location>
        <begin position="348"/>
        <end position="368"/>
    </location>
</feature>
<feature type="binding site" description="axial binding residue" evidence="2">
    <location>
        <position position="84"/>
    </location>
    <ligand>
        <name>heme b</name>
        <dbReference type="ChEBI" id="CHEBI:60344"/>
        <label>b562</label>
    </ligand>
    <ligandPart>
        <name>Fe</name>
        <dbReference type="ChEBI" id="CHEBI:18248"/>
    </ligandPart>
</feature>
<feature type="binding site" description="axial binding residue" evidence="2">
    <location>
        <position position="98"/>
    </location>
    <ligand>
        <name>heme b</name>
        <dbReference type="ChEBI" id="CHEBI:60344"/>
        <label>b566</label>
    </ligand>
    <ligandPart>
        <name>Fe</name>
        <dbReference type="ChEBI" id="CHEBI:18248"/>
    </ligandPart>
</feature>
<feature type="binding site" description="axial binding residue" evidence="2">
    <location>
        <position position="183"/>
    </location>
    <ligand>
        <name>heme b</name>
        <dbReference type="ChEBI" id="CHEBI:60344"/>
        <label>b562</label>
    </ligand>
    <ligandPart>
        <name>Fe</name>
        <dbReference type="ChEBI" id="CHEBI:18248"/>
    </ligandPart>
</feature>
<feature type="binding site" description="axial binding residue" evidence="2">
    <location>
        <position position="197"/>
    </location>
    <ligand>
        <name>heme b</name>
        <dbReference type="ChEBI" id="CHEBI:60344"/>
        <label>b566</label>
    </ligand>
    <ligandPart>
        <name>Fe</name>
        <dbReference type="ChEBI" id="CHEBI:18248"/>
    </ligandPart>
</feature>
<feature type="binding site" evidence="2">
    <location>
        <position position="202"/>
    </location>
    <ligand>
        <name>a ubiquinone</name>
        <dbReference type="ChEBI" id="CHEBI:16389"/>
    </ligand>
</feature>
<gene>
    <name type="primary">MT-CYB</name>
    <name type="synonym">COB</name>
    <name type="synonym">CYTB</name>
    <name type="synonym">MTCYB</name>
</gene>
<comment type="function">
    <text evidence="2">Component of the ubiquinol-cytochrome c reductase complex (complex III or cytochrome b-c1 complex) that is part of the mitochondrial respiratory chain. The b-c1 complex mediates electron transfer from ubiquinol to cytochrome c. Contributes to the generation of a proton gradient across the mitochondrial membrane that is then used for ATP synthesis.</text>
</comment>
<comment type="cofactor">
    <cofactor evidence="2">
        <name>heme b</name>
        <dbReference type="ChEBI" id="CHEBI:60344"/>
    </cofactor>
    <text evidence="2">Binds 2 heme b groups non-covalently.</text>
</comment>
<comment type="subunit">
    <text evidence="2">The cytochrome bc1 complex contains 11 subunits: 3 respiratory subunits (MT-CYB, CYC1 and UQCRFS1), 2 core proteins (UQCRC1 and UQCRC2) and 6 low-molecular weight proteins (UQCRH/QCR6, UQCRB/QCR7, UQCRQ/QCR8, UQCR10/QCR9, UQCR11/QCR10 and a cleavage product of UQCRFS1). This cytochrome bc1 complex then forms a dimer.</text>
</comment>
<comment type="subcellular location">
    <subcellularLocation>
        <location evidence="2">Mitochondrion inner membrane</location>
        <topology evidence="2">Multi-pass membrane protein</topology>
    </subcellularLocation>
</comment>
<comment type="miscellaneous">
    <text evidence="1">Heme 1 (or BL or b562) is low-potential and absorbs at about 562 nm, and heme 2 (or BH or b566) is high-potential and absorbs at about 566 nm.</text>
</comment>
<comment type="similarity">
    <text evidence="3 4">Belongs to the cytochrome b family.</text>
</comment>
<comment type="caution">
    <text evidence="2">The full-length protein contains only eight transmembrane helices, not nine as predicted by bioinformatics tools.</text>
</comment>
<keyword id="KW-0249">Electron transport</keyword>
<keyword id="KW-0349">Heme</keyword>
<keyword id="KW-0408">Iron</keyword>
<keyword id="KW-0472">Membrane</keyword>
<keyword id="KW-0479">Metal-binding</keyword>
<keyword id="KW-0496">Mitochondrion</keyword>
<keyword id="KW-0999">Mitochondrion inner membrane</keyword>
<keyword id="KW-0679">Respiratory chain</keyword>
<keyword id="KW-0812">Transmembrane</keyword>
<keyword id="KW-1133">Transmembrane helix</keyword>
<keyword id="KW-0813">Transport</keyword>
<keyword id="KW-0830">Ubiquinone</keyword>
<accession>O79197</accession>
<geneLocation type="mitochondrion"/>
<name>CYB_DAPCA</name>